<proteinExistence type="inferred from homology"/>
<keyword id="KW-1185">Reference proteome</keyword>
<dbReference type="EMBL" id="CP001463">
    <property type="protein sequence ID" value="ACS90215.1"/>
    <property type="molecule type" value="Genomic_DNA"/>
</dbReference>
<dbReference type="RefSeq" id="WP_015849434.1">
    <property type="nucleotide sequence ID" value="NC_012883.1"/>
</dbReference>
<dbReference type="SMR" id="C6A3M0"/>
<dbReference type="STRING" id="604354.TSIB_1161"/>
<dbReference type="GeneID" id="8096159"/>
<dbReference type="KEGG" id="tsi:TSIB_1161"/>
<dbReference type="eggNOG" id="arCOG00928">
    <property type="taxonomic scope" value="Archaea"/>
</dbReference>
<dbReference type="HOGENOM" id="CLU_095956_1_0_2"/>
<dbReference type="OrthoDB" id="15207at2157"/>
<dbReference type="Proteomes" id="UP000009079">
    <property type="component" value="Chromosome"/>
</dbReference>
<dbReference type="Gene3D" id="3.30.2170.10">
    <property type="entry name" value="archaeoglobus fulgidus dsm 4304 superfamily"/>
    <property type="match status" value="1"/>
</dbReference>
<dbReference type="HAMAP" id="MF_00582">
    <property type="entry name" value="UPF0215"/>
    <property type="match status" value="1"/>
</dbReference>
<dbReference type="InterPro" id="IPR002802">
    <property type="entry name" value="Endo_dU"/>
</dbReference>
<dbReference type="NCBIfam" id="NF001977">
    <property type="entry name" value="PRK00766.1"/>
    <property type="match status" value="1"/>
</dbReference>
<dbReference type="PANTHER" id="PTHR39518">
    <property type="entry name" value="UPF0215 PROTEIN MJ1150"/>
    <property type="match status" value="1"/>
</dbReference>
<dbReference type="PANTHER" id="PTHR39518:SF2">
    <property type="entry name" value="UPF0215 PROTEIN MJ1150"/>
    <property type="match status" value="1"/>
</dbReference>
<dbReference type="Pfam" id="PF01949">
    <property type="entry name" value="DUF99"/>
    <property type="match status" value="1"/>
</dbReference>
<dbReference type="PIRSF" id="PIRSF006380">
    <property type="entry name" value="UCP006380"/>
    <property type="match status" value="1"/>
</dbReference>
<gene>
    <name type="ordered locus">TSIB_1161</name>
</gene>
<name>Y1161_THESM</name>
<reference key="1">
    <citation type="journal article" date="2009" name="Appl. Environ. Microbiol.">
        <title>Metabolic versatility and indigenous origin of the archaeon Thermococcus sibiricus, isolated from a siberian oil reservoir, as revealed by genome analysis.</title>
        <authorList>
            <person name="Mardanov A.V."/>
            <person name="Ravin N.V."/>
            <person name="Svetlitchnyi V.A."/>
            <person name="Beletsky A.V."/>
            <person name="Miroshnichenko M.L."/>
            <person name="Bonch-Osmolovskaya E.A."/>
            <person name="Skryabin K.G."/>
        </authorList>
    </citation>
    <scope>NUCLEOTIDE SEQUENCE [LARGE SCALE GENOMIC DNA]</scope>
    <source>
        <strain>DSM 12597 / MM 739</strain>
    </source>
</reference>
<accession>C6A3M0</accession>
<feature type="chain" id="PRO_1000212140" description="UPF0215 protein TSIB_1161">
    <location>
        <begin position="1"/>
        <end position="195"/>
    </location>
</feature>
<evidence type="ECO:0000255" key="1">
    <source>
        <dbReference type="HAMAP-Rule" id="MF_00582"/>
    </source>
</evidence>
<comment type="similarity">
    <text evidence="1">Belongs to the UPF0215 family.</text>
</comment>
<protein>
    <recommendedName>
        <fullName evidence="1">UPF0215 protein TSIB_1161</fullName>
    </recommendedName>
</protein>
<sequence>MIRKIKPQIRVIGFDDGTFSFKSKIKRDKTILVGVVMKGSQDVVGVVTRWIEVDGRDATEKMIEAIHNSRFKDLRIIMLKGITYAGFNVVDVEELSRETRMPVIIVIRKKPDLQAMEKALKKHFSDAEEKISLLHKAGKIKELIPGKLYYQAIGVSYDQAEEIIRLTQKSSLIPEPLRLAHMIASAVMSGESKKE</sequence>
<organism>
    <name type="scientific">Thermococcus sibiricus (strain DSM 12597 / MM 739)</name>
    <dbReference type="NCBI Taxonomy" id="604354"/>
    <lineage>
        <taxon>Archaea</taxon>
        <taxon>Methanobacteriati</taxon>
        <taxon>Methanobacteriota</taxon>
        <taxon>Thermococci</taxon>
        <taxon>Thermococcales</taxon>
        <taxon>Thermococcaceae</taxon>
        <taxon>Thermococcus</taxon>
    </lineage>
</organism>